<accession>B5Z8F5</accession>
<gene>
    <name evidence="1" type="primary">ybeY</name>
    <name type="ordered locus">HPG27_1104</name>
</gene>
<keyword id="KW-0963">Cytoplasm</keyword>
<keyword id="KW-0255">Endonuclease</keyword>
<keyword id="KW-0378">Hydrolase</keyword>
<keyword id="KW-0479">Metal-binding</keyword>
<keyword id="KW-0540">Nuclease</keyword>
<keyword id="KW-1185">Reference proteome</keyword>
<keyword id="KW-0690">Ribosome biogenesis</keyword>
<keyword id="KW-0698">rRNA processing</keyword>
<keyword id="KW-0862">Zinc</keyword>
<comment type="function">
    <text evidence="1">Single strand-specific metallo-endoribonuclease involved in late-stage 70S ribosome quality control and in maturation of the 3' terminus of the 16S rRNA.</text>
</comment>
<comment type="cofactor">
    <cofactor evidence="1">
        <name>Zn(2+)</name>
        <dbReference type="ChEBI" id="CHEBI:29105"/>
    </cofactor>
    <text evidence="1">Binds 1 zinc ion.</text>
</comment>
<comment type="subcellular location">
    <subcellularLocation>
        <location evidence="1">Cytoplasm</location>
    </subcellularLocation>
</comment>
<comment type="similarity">
    <text evidence="1">Belongs to the endoribonuclease YbeY family.</text>
</comment>
<evidence type="ECO:0000255" key="1">
    <source>
        <dbReference type="HAMAP-Rule" id="MF_00009"/>
    </source>
</evidence>
<proteinExistence type="inferred from homology"/>
<feature type="chain" id="PRO_1000089183" description="Endoribonuclease YbeY">
    <location>
        <begin position="1"/>
        <end position="142"/>
    </location>
</feature>
<feature type="binding site" evidence="1">
    <location>
        <position position="100"/>
    </location>
    <ligand>
        <name>Zn(2+)</name>
        <dbReference type="ChEBI" id="CHEBI:29105"/>
        <note>catalytic</note>
    </ligand>
</feature>
<feature type="binding site" evidence="1">
    <location>
        <position position="104"/>
    </location>
    <ligand>
        <name>Zn(2+)</name>
        <dbReference type="ChEBI" id="CHEBI:29105"/>
        <note>catalytic</note>
    </ligand>
</feature>
<feature type="binding site" evidence="1">
    <location>
        <position position="110"/>
    </location>
    <ligand>
        <name>Zn(2+)</name>
        <dbReference type="ChEBI" id="CHEBI:29105"/>
        <note>catalytic</note>
    </ligand>
</feature>
<organism>
    <name type="scientific">Helicobacter pylori (strain G27)</name>
    <dbReference type="NCBI Taxonomy" id="563041"/>
    <lineage>
        <taxon>Bacteria</taxon>
        <taxon>Pseudomonadati</taxon>
        <taxon>Campylobacterota</taxon>
        <taxon>Epsilonproteobacteria</taxon>
        <taxon>Campylobacterales</taxon>
        <taxon>Helicobacteraceae</taxon>
        <taxon>Helicobacter</taxon>
    </lineage>
</organism>
<dbReference type="EC" id="3.1.-.-" evidence="1"/>
<dbReference type="EMBL" id="CP001173">
    <property type="protein sequence ID" value="ACI27854.1"/>
    <property type="molecule type" value="Genomic_DNA"/>
</dbReference>
<dbReference type="RefSeq" id="WP_000889548.1">
    <property type="nucleotide sequence ID" value="NC_011333.1"/>
</dbReference>
<dbReference type="SMR" id="B5Z8F5"/>
<dbReference type="KEGG" id="hpg:HPG27_1104"/>
<dbReference type="HOGENOM" id="CLU_106710_3_0_7"/>
<dbReference type="Proteomes" id="UP000001735">
    <property type="component" value="Chromosome"/>
</dbReference>
<dbReference type="GO" id="GO:0005737">
    <property type="term" value="C:cytoplasm"/>
    <property type="evidence" value="ECO:0007669"/>
    <property type="project" value="UniProtKB-SubCell"/>
</dbReference>
<dbReference type="GO" id="GO:0004222">
    <property type="term" value="F:metalloendopeptidase activity"/>
    <property type="evidence" value="ECO:0007669"/>
    <property type="project" value="InterPro"/>
</dbReference>
<dbReference type="GO" id="GO:0004521">
    <property type="term" value="F:RNA endonuclease activity"/>
    <property type="evidence" value="ECO:0007669"/>
    <property type="project" value="UniProtKB-UniRule"/>
</dbReference>
<dbReference type="GO" id="GO:0008270">
    <property type="term" value="F:zinc ion binding"/>
    <property type="evidence" value="ECO:0007669"/>
    <property type="project" value="UniProtKB-UniRule"/>
</dbReference>
<dbReference type="GO" id="GO:0006364">
    <property type="term" value="P:rRNA processing"/>
    <property type="evidence" value="ECO:0007669"/>
    <property type="project" value="UniProtKB-UniRule"/>
</dbReference>
<dbReference type="Gene3D" id="3.40.390.30">
    <property type="entry name" value="Metalloproteases ('zincins'), catalytic domain"/>
    <property type="match status" value="1"/>
</dbReference>
<dbReference type="HAMAP" id="MF_00009">
    <property type="entry name" value="Endoribonucl_YbeY"/>
    <property type="match status" value="1"/>
</dbReference>
<dbReference type="InterPro" id="IPR023091">
    <property type="entry name" value="MetalPrtase_cat_dom_sf_prd"/>
</dbReference>
<dbReference type="InterPro" id="IPR002036">
    <property type="entry name" value="YbeY"/>
</dbReference>
<dbReference type="InterPro" id="IPR020549">
    <property type="entry name" value="YbeY_CS"/>
</dbReference>
<dbReference type="NCBIfam" id="TIGR00043">
    <property type="entry name" value="rRNA maturation RNase YbeY"/>
    <property type="match status" value="1"/>
</dbReference>
<dbReference type="PANTHER" id="PTHR46986">
    <property type="entry name" value="ENDORIBONUCLEASE YBEY, CHLOROPLASTIC"/>
    <property type="match status" value="1"/>
</dbReference>
<dbReference type="PANTHER" id="PTHR46986:SF1">
    <property type="entry name" value="ENDORIBONUCLEASE YBEY, CHLOROPLASTIC"/>
    <property type="match status" value="1"/>
</dbReference>
<dbReference type="Pfam" id="PF02130">
    <property type="entry name" value="YbeY"/>
    <property type="match status" value="1"/>
</dbReference>
<dbReference type="SUPFAM" id="SSF55486">
    <property type="entry name" value="Metalloproteases ('zincins'), catalytic domain"/>
    <property type="match status" value="1"/>
</dbReference>
<dbReference type="PROSITE" id="PS01306">
    <property type="entry name" value="UPF0054"/>
    <property type="match status" value="1"/>
</dbReference>
<reference key="1">
    <citation type="journal article" date="2009" name="J. Bacteriol.">
        <title>The complete genome sequence of Helicobacter pylori strain G27.</title>
        <authorList>
            <person name="Baltrus D.A."/>
            <person name="Amieva M.R."/>
            <person name="Covacci A."/>
            <person name="Lowe T.M."/>
            <person name="Merrell D.S."/>
            <person name="Ottemann K.M."/>
            <person name="Stein M."/>
            <person name="Salama N.R."/>
            <person name="Guillemin K."/>
        </authorList>
    </citation>
    <scope>NUCLEOTIDE SEQUENCE [LARGE SCALE GENOMIC DNA]</scope>
    <source>
        <strain>G27</strain>
    </source>
</reference>
<protein>
    <recommendedName>
        <fullName evidence="1">Endoribonuclease YbeY</fullName>
        <ecNumber evidence="1">3.1.-.-</ecNumber>
    </recommendedName>
</protein>
<sequence>MLEIDNQTPLESDFLLLEKIANVLAPTQIIELILVSGETMREINRDLRGCDYATDVLSFPLEAIPHTPLGSVVINAPLAQTNALKLGHRLEEEIALLFIHGVLHLLGYDHEKDKGEQRQKESELIKIFNLPLSLIERTQDSF</sequence>
<name>YBEY_HELPG</name>